<proteinExistence type="inferred from homology"/>
<feature type="chain" id="PRO_0000355679" description="Large ribosomal subunit protein uL24">
    <location>
        <begin position="1"/>
        <end position="101"/>
    </location>
</feature>
<protein>
    <recommendedName>
        <fullName evidence="1">Large ribosomal subunit protein uL24</fullName>
    </recommendedName>
    <alternativeName>
        <fullName evidence="2">50S ribosomal protein L24</fullName>
    </alternativeName>
</protein>
<gene>
    <name evidence="1" type="primary">rplX</name>
    <name type="ordered locus">Emin_1407</name>
</gene>
<keyword id="KW-1185">Reference proteome</keyword>
<keyword id="KW-0687">Ribonucleoprotein</keyword>
<keyword id="KW-0689">Ribosomal protein</keyword>
<keyword id="KW-0694">RNA-binding</keyword>
<keyword id="KW-0699">rRNA-binding</keyword>
<evidence type="ECO:0000255" key="1">
    <source>
        <dbReference type="HAMAP-Rule" id="MF_01326"/>
    </source>
</evidence>
<evidence type="ECO:0000305" key="2"/>
<reference key="1">
    <citation type="journal article" date="2009" name="Appl. Environ. Microbiol.">
        <title>Genomic analysis of 'Elusimicrobium minutum,' the first cultivated representative of the phylum 'Elusimicrobia' (formerly termite group 1).</title>
        <authorList>
            <person name="Herlemann D.P.R."/>
            <person name="Geissinger O."/>
            <person name="Ikeda-Ohtsubo W."/>
            <person name="Kunin V."/>
            <person name="Sun H."/>
            <person name="Lapidus A."/>
            <person name="Hugenholtz P."/>
            <person name="Brune A."/>
        </authorList>
    </citation>
    <scope>NUCLEOTIDE SEQUENCE [LARGE SCALE GENOMIC DNA]</scope>
    <source>
        <strain>Pei191</strain>
    </source>
</reference>
<organism>
    <name type="scientific">Elusimicrobium minutum (strain Pei191)</name>
    <dbReference type="NCBI Taxonomy" id="445932"/>
    <lineage>
        <taxon>Bacteria</taxon>
        <taxon>Pseudomonadati</taxon>
        <taxon>Elusimicrobiota</taxon>
        <taxon>Elusimicrobia</taxon>
        <taxon>Elusimicrobiales</taxon>
        <taxon>Elusimicrobiaceae</taxon>
        <taxon>Elusimicrobium</taxon>
    </lineage>
</organism>
<accession>B2KEL0</accession>
<comment type="function">
    <text evidence="1">One of two assembly initiator proteins, it binds directly to the 5'-end of the 23S rRNA, where it nucleates assembly of the 50S subunit.</text>
</comment>
<comment type="function">
    <text evidence="1">One of the proteins that surrounds the polypeptide exit tunnel on the outside of the subunit.</text>
</comment>
<comment type="subunit">
    <text evidence="1">Part of the 50S ribosomal subunit.</text>
</comment>
<comment type="similarity">
    <text evidence="1">Belongs to the universal ribosomal protein uL24 family.</text>
</comment>
<dbReference type="EMBL" id="CP001055">
    <property type="protein sequence ID" value="ACC98956.1"/>
    <property type="molecule type" value="Genomic_DNA"/>
</dbReference>
<dbReference type="RefSeq" id="WP_012415571.1">
    <property type="nucleotide sequence ID" value="NC_010644.1"/>
</dbReference>
<dbReference type="SMR" id="B2KEL0"/>
<dbReference type="STRING" id="445932.Emin_1407"/>
<dbReference type="KEGG" id="emi:Emin_1407"/>
<dbReference type="HOGENOM" id="CLU_093315_2_3_0"/>
<dbReference type="OrthoDB" id="9807419at2"/>
<dbReference type="Proteomes" id="UP000001029">
    <property type="component" value="Chromosome"/>
</dbReference>
<dbReference type="GO" id="GO:1990904">
    <property type="term" value="C:ribonucleoprotein complex"/>
    <property type="evidence" value="ECO:0007669"/>
    <property type="project" value="UniProtKB-KW"/>
</dbReference>
<dbReference type="GO" id="GO:0005840">
    <property type="term" value="C:ribosome"/>
    <property type="evidence" value="ECO:0007669"/>
    <property type="project" value="UniProtKB-KW"/>
</dbReference>
<dbReference type="GO" id="GO:0019843">
    <property type="term" value="F:rRNA binding"/>
    <property type="evidence" value="ECO:0007669"/>
    <property type="project" value="UniProtKB-UniRule"/>
</dbReference>
<dbReference type="GO" id="GO:0003735">
    <property type="term" value="F:structural constituent of ribosome"/>
    <property type="evidence" value="ECO:0007669"/>
    <property type="project" value="InterPro"/>
</dbReference>
<dbReference type="GO" id="GO:0006412">
    <property type="term" value="P:translation"/>
    <property type="evidence" value="ECO:0007669"/>
    <property type="project" value="UniProtKB-UniRule"/>
</dbReference>
<dbReference type="CDD" id="cd06089">
    <property type="entry name" value="KOW_RPL26"/>
    <property type="match status" value="1"/>
</dbReference>
<dbReference type="Gene3D" id="2.30.30.30">
    <property type="match status" value="1"/>
</dbReference>
<dbReference type="HAMAP" id="MF_01326_B">
    <property type="entry name" value="Ribosomal_uL24_B"/>
    <property type="match status" value="1"/>
</dbReference>
<dbReference type="InterPro" id="IPR005824">
    <property type="entry name" value="KOW"/>
</dbReference>
<dbReference type="InterPro" id="IPR014722">
    <property type="entry name" value="Rib_uL2_dom2"/>
</dbReference>
<dbReference type="InterPro" id="IPR003256">
    <property type="entry name" value="Ribosomal_uL24"/>
</dbReference>
<dbReference type="InterPro" id="IPR005825">
    <property type="entry name" value="Ribosomal_uL24_CS"/>
</dbReference>
<dbReference type="InterPro" id="IPR041988">
    <property type="entry name" value="Ribosomal_uL24_KOW"/>
</dbReference>
<dbReference type="InterPro" id="IPR008991">
    <property type="entry name" value="Translation_prot_SH3-like_sf"/>
</dbReference>
<dbReference type="NCBIfam" id="TIGR01079">
    <property type="entry name" value="rplX_bact"/>
    <property type="match status" value="1"/>
</dbReference>
<dbReference type="PANTHER" id="PTHR12903">
    <property type="entry name" value="MITOCHONDRIAL RIBOSOMAL PROTEIN L24"/>
    <property type="match status" value="1"/>
</dbReference>
<dbReference type="Pfam" id="PF00467">
    <property type="entry name" value="KOW"/>
    <property type="match status" value="1"/>
</dbReference>
<dbReference type="Pfam" id="PF17136">
    <property type="entry name" value="ribosomal_L24"/>
    <property type="match status" value="1"/>
</dbReference>
<dbReference type="SMART" id="SM00739">
    <property type="entry name" value="KOW"/>
    <property type="match status" value="1"/>
</dbReference>
<dbReference type="SUPFAM" id="SSF50104">
    <property type="entry name" value="Translation proteins SH3-like domain"/>
    <property type="match status" value="1"/>
</dbReference>
<dbReference type="PROSITE" id="PS01108">
    <property type="entry name" value="RIBOSOMAL_L24"/>
    <property type="match status" value="1"/>
</dbReference>
<sequence>MLKKNDSVVILSGKDKGKKGEIKEVIASKNRVIVSGVNIVSKHEKPAGNKKGGIIKVEAPLHISNVAIVCKKCNKAMTPKHTVANDGAKVRVCRKCGETVK</sequence>
<name>RL24_ELUMP</name>